<gene>
    <name type="ordered locus">YHR202W</name>
</gene>
<comment type="subcellular location">
    <subcellularLocation>
        <location evidence="2">Vacuole</location>
    </subcellularLocation>
</comment>
<comment type="PTM">
    <text evidence="3">N-glycosylated.</text>
</comment>
<organism>
    <name type="scientific">Saccharomyces cerevisiae (strain ATCC 204508 / S288c)</name>
    <name type="common">Baker's yeast</name>
    <dbReference type="NCBI Taxonomy" id="559292"/>
    <lineage>
        <taxon>Eukaryota</taxon>
        <taxon>Fungi</taxon>
        <taxon>Dikarya</taxon>
        <taxon>Ascomycota</taxon>
        <taxon>Saccharomycotina</taxon>
        <taxon>Saccharomycetes</taxon>
        <taxon>Saccharomycetales</taxon>
        <taxon>Saccharomycetaceae</taxon>
        <taxon>Saccharomyces</taxon>
    </lineage>
</organism>
<feature type="chain" id="PRO_0000202941" description="Uncharacterized protein YHR202W">
    <location>
        <begin position="1"/>
        <end position="602"/>
    </location>
</feature>
<feature type="glycosylation site" description="N-linked (GlcNAc...) asparagine" evidence="1">
    <location>
        <position position="305"/>
    </location>
</feature>
<feature type="glycosylation site" description="N-linked (GlcNAc...) asparagine" evidence="1">
    <location>
        <position position="497"/>
    </location>
</feature>
<feature type="glycosylation site" description="N-linked (GlcNAc...) asparagine" evidence="1">
    <location>
        <position position="577"/>
    </location>
</feature>
<proteinExistence type="evidence at protein level"/>
<dbReference type="EMBL" id="U00030">
    <property type="protein sequence ID" value="AAB68354.1"/>
    <property type="molecule type" value="Genomic_DNA"/>
</dbReference>
<dbReference type="EMBL" id="BK006934">
    <property type="protein sequence ID" value="DAA06895.1"/>
    <property type="molecule type" value="Genomic_DNA"/>
</dbReference>
<dbReference type="PIR" id="S46676">
    <property type="entry name" value="S46676"/>
</dbReference>
<dbReference type="SMR" id="P38887"/>
<dbReference type="BioGRID" id="36636">
    <property type="interactions" value="67"/>
</dbReference>
<dbReference type="FunCoup" id="P38887">
    <property type="interactions" value="44"/>
</dbReference>
<dbReference type="IntAct" id="P38887">
    <property type="interactions" value="3"/>
</dbReference>
<dbReference type="STRING" id="4932.YHR202W"/>
<dbReference type="GlyGen" id="P38887">
    <property type="glycosylation" value="3 sites"/>
</dbReference>
<dbReference type="PaxDb" id="4932-YHR202W"/>
<dbReference type="PeptideAtlas" id="P38887"/>
<dbReference type="EnsemblFungi" id="YHR202W_mRNA">
    <property type="protein sequence ID" value="YHR202W"/>
    <property type="gene ID" value="YHR202W"/>
</dbReference>
<dbReference type="KEGG" id="sce:YHR202W"/>
<dbReference type="AGR" id="SGD:S000001245"/>
<dbReference type="SGD" id="S000001245">
    <property type="gene designation" value="YHR202W"/>
</dbReference>
<dbReference type="VEuPathDB" id="FungiDB:YHR202W"/>
<dbReference type="eggNOG" id="KOG4419">
    <property type="taxonomic scope" value="Eukaryota"/>
</dbReference>
<dbReference type="GeneTree" id="ENSGT00530000063775"/>
<dbReference type="HOGENOM" id="CLU_019028_0_0_1"/>
<dbReference type="InParanoid" id="P38887"/>
<dbReference type="OMA" id="PISFYRV"/>
<dbReference type="OrthoDB" id="7722975at2759"/>
<dbReference type="BioCyc" id="YEAST:G3O-31229-MONOMER"/>
<dbReference type="BioGRID-ORCS" id="856609">
    <property type="hits" value="0 hits in 10 CRISPR screens"/>
</dbReference>
<dbReference type="PRO" id="PR:P38887"/>
<dbReference type="Proteomes" id="UP000002311">
    <property type="component" value="Chromosome VIII"/>
</dbReference>
<dbReference type="RNAct" id="P38887">
    <property type="molecule type" value="protein"/>
</dbReference>
<dbReference type="GO" id="GO:0005829">
    <property type="term" value="C:cytosol"/>
    <property type="evidence" value="ECO:0000314"/>
    <property type="project" value="SGD"/>
</dbReference>
<dbReference type="GO" id="GO:0005576">
    <property type="term" value="C:extracellular region"/>
    <property type="evidence" value="ECO:0000314"/>
    <property type="project" value="SGD"/>
</dbReference>
<dbReference type="GO" id="GO:0000324">
    <property type="term" value="C:fungal-type vacuole"/>
    <property type="evidence" value="ECO:0007005"/>
    <property type="project" value="SGD"/>
</dbReference>
<dbReference type="GO" id="GO:0008253">
    <property type="term" value="F:5'-nucleotidase activity"/>
    <property type="evidence" value="ECO:0000250"/>
    <property type="project" value="SGD"/>
</dbReference>
<dbReference type="GO" id="GO:0019677">
    <property type="term" value="P:NAD catabolic process"/>
    <property type="evidence" value="ECO:0000315"/>
    <property type="project" value="SGD"/>
</dbReference>
<dbReference type="CDD" id="cd07407">
    <property type="entry name" value="MPP_YHR202W_N"/>
    <property type="match status" value="1"/>
</dbReference>
<dbReference type="FunFam" id="3.60.21.10:FF:000043">
    <property type="entry name" value="Ser/Thr protein phosphatase family"/>
    <property type="match status" value="1"/>
</dbReference>
<dbReference type="FunFam" id="3.90.780.10:FF:000011">
    <property type="entry name" value="YHR202W-like protein"/>
    <property type="match status" value="1"/>
</dbReference>
<dbReference type="Gene3D" id="3.60.21.10">
    <property type="match status" value="1"/>
</dbReference>
<dbReference type="Gene3D" id="3.90.780.10">
    <property type="entry name" value="5'-Nucleotidase, C-terminal domain"/>
    <property type="match status" value="2"/>
</dbReference>
<dbReference type="InterPro" id="IPR036907">
    <property type="entry name" value="5'-Nucleotdase_C_sf"/>
</dbReference>
<dbReference type="InterPro" id="IPR006179">
    <property type="entry name" value="5_nucleotidase/apyrase"/>
</dbReference>
<dbReference type="InterPro" id="IPR029052">
    <property type="entry name" value="Metallo-depent_PP-like"/>
</dbReference>
<dbReference type="InterPro" id="IPR053828">
    <property type="entry name" value="Nucleosidase_C"/>
</dbReference>
<dbReference type="InterPro" id="IPR014485">
    <property type="entry name" value="Pesterase_C1039"/>
</dbReference>
<dbReference type="InterPro" id="IPR041823">
    <property type="entry name" value="YHR202W_N"/>
</dbReference>
<dbReference type="PANTHER" id="PTHR11575">
    <property type="entry name" value="5'-NUCLEOTIDASE-RELATED"/>
    <property type="match status" value="1"/>
</dbReference>
<dbReference type="PANTHER" id="PTHR11575:SF22">
    <property type="entry name" value="ADL392WP"/>
    <property type="match status" value="1"/>
</dbReference>
<dbReference type="Pfam" id="PF21953">
    <property type="entry name" value="NadN_nucleosid_C"/>
    <property type="match status" value="1"/>
</dbReference>
<dbReference type="PIRSF" id="PIRSF017316">
    <property type="entry name" value="Pesterase_C1039"/>
    <property type="match status" value="1"/>
</dbReference>
<dbReference type="SUPFAM" id="SSF55816">
    <property type="entry name" value="5'-nucleotidase (syn. UDP-sugar hydrolase), C-terminal domain"/>
    <property type="match status" value="1"/>
</dbReference>
<dbReference type="SUPFAM" id="SSF56300">
    <property type="entry name" value="Metallo-dependent phosphatases"/>
    <property type="match status" value="1"/>
</dbReference>
<keyword id="KW-0325">Glycoprotein</keyword>
<keyword id="KW-1185">Reference proteome</keyword>
<keyword id="KW-0926">Vacuole</keyword>
<sequence length="602" mass="68998">MILKLVHCLVALTGLIFAKPYQQQQAVLAPSQDVPLRDIHIGDINFIHTTDTHGWLGSHLSQNDYDADWGDFVAFVDILREKILRQSRDVIVIDTGDKRDGNGLSDATWPPGLRSSEIFNMMDYDLLTLGNHELYTAESAILEYRGTSQSSKFKDKYVCSNVEFIEDDGTRVPFGNKYITFETPIMKQRVLALSFLFSFQRANNRAIVTPPLEEITQKSWFQNMVETNREEEIDLIIVFGHLPATDPTEREMHKIHALIRKYYPNTVIQYFGGHTHIRDFVQLDSKSTCLQSGRFAETVGFLSINMTDPVDAESPIFSRRYIDFNKEAFKYHLSKLGHDSNVPVSTKKGKTISRLVNDLRHELNLNEKLGYIPQTYYVSTRPLNSEENLYHLITHKILPNLIPPKNYEPSMSRFILINTGSVRYDLYKGPFTKDTEYIVMPFNNDWRFITVPLVVASRVETYLNKGPVIASLGIPSSSHHKQHFGGFQKCPFINNPNLSEGYTTEDDFGCHGDDTPHNSQREYDIPNVVQCKEVKKVQEEEADPSKMVHVIFYSFMELDILNAVNSIINDLGLRMENLTTNDCSHYGGDSTKKLLRDYFSQF</sequence>
<accession>P38887</accession>
<accession>D3DLF1</accession>
<protein>
    <recommendedName>
        <fullName>Uncharacterized protein YHR202W</fullName>
    </recommendedName>
</protein>
<evidence type="ECO:0000255" key="1"/>
<evidence type="ECO:0000269" key="2">
    <source>
    </source>
</evidence>
<evidence type="ECO:0000269" key="3">
    <source>
    </source>
</evidence>
<name>YH02_YEAST</name>
<reference key="1">
    <citation type="journal article" date="1994" name="Science">
        <title>Complete nucleotide sequence of Saccharomyces cerevisiae chromosome VIII.</title>
        <authorList>
            <person name="Johnston M."/>
            <person name="Andrews S."/>
            <person name="Brinkman R."/>
            <person name="Cooper J."/>
            <person name="Ding H."/>
            <person name="Dover J."/>
            <person name="Du Z."/>
            <person name="Favello A."/>
            <person name="Fulton L."/>
            <person name="Gattung S."/>
            <person name="Geisel C."/>
            <person name="Kirsten J."/>
            <person name="Kucaba T."/>
            <person name="Hillier L.W."/>
            <person name="Jier M."/>
            <person name="Johnston L."/>
            <person name="Langston Y."/>
            <person name="Latreille P."/>
            <person name="Louis E.J."/>
            <person name="Macri C."/>
            <person name="Mardis E."/>
            <person name="Menezes S."/>
            <person name="Mouser L."/>
            <person name="Nhan M."/>
            <person name="Rifkin L."/>
            <person name="Riles L."/>
            <person name="St Peter H."/>
            <person name="Trevaskis E."/>
            <person name="Vaughan K."/>
            <person name="Vignati D."/>
            <person name="Wilcox L."/>
            <person name="Wohldman P."/>
            <person name="Waterston R."/>
            <person name="Wilson R."/>
            <person name="Vaudin M."/>
        </authorList>
    </citation>
    <scope>NUCLEOTIDE SEQUENCE [LARGE SCALE GENOMIC DNA]</scope>
    <source>
        <strain>ATCC 204508 / S288c</strain>
    </source>
</reference>
<reference key="2">
    <citation type="journal article" date="2014" name="G3 (Bethesda)">
        <title>The reference genome sequence of Saccharomyces cerevisiae: Then and now.</title>
        <authorList>
            <person name="Engel S.R."/>
            <person name="Dietrich F.S."/>
            <person name="Fisk D.G."/>
            <person name="Binkley G."/>
            <person name="Balakrishnan R."/>
            <person name="Costanzo M.C."/>
            <person name="Dwight S.S."/>
            <person name="Hitz B.C."/>
            <person name="Karra K."/>
            <person name="Nash R.S."/>
            <person name="Weng S."/>
            <person name="Wong E.D."/>
            <person name="Lloyd P."/>
            <person name="Skrzypek M.S."/>
            <person name="Miyasato S.R."/>
            <person name="Simison M."/>
            <person name="Cherry J.M."/>
        </authorList>
    </citation>
    <scope>GENOME REANNOTATION</scope>
    <source>
        <strain>ATCC 204508 / S288c</strain>
    </source>
</reference>
<reference key="3">
    <citation type="journal article" date="2003" name="Nature">
        <title>Global analysis of protein localization in budding yeast.</title>
        <authorList>
            <person name="Huh W.-K."/>
            <person name="Falvo J.V."/>
            <person name="Gerke L.C."/>
            <person name="Carroll A.S."/>
            <person name="Howson R.W."/>
            <person name="Weissman J.S."/>
            <person name="O'Shea E.K."/>
        </authorList>
    </citation>
    <scope>SUBCELLULAR LOCATION [LARGE SCALE ANALYSIS]</scope>
</reference>
<reference key="4">
    <citation type="journal article" date="2009" name="Mol. Syst. Biol.">
        <title>Global analysis of the glycoproteome in Saccharomyces cerevisiae reveals new roles for protein glycosylation in eukaryotes.</title>
        <authorList>
            <person name="Kung L.A."/>
            <person name="Tao S.-C."/>
            <person name="Qian J."/>
            <person name="Smith M.G."/>
            <person name="Snyder M."/>
            <person name="Zhu H."/>
        </authorList>
    </citation>
    <scope>GLYCOSYLATION [LARGE SCALE ANALYSIS]</scope>
</reference>